<accession>Q9FFJ3</accession>
<name>PIRL1_ARATH</name>
<organism>
    <name type="scientific">Arabidopsis thaliana</name>
    <name type="common">Mouse-ear cress</name>
    <dbReference type="NCBI Taxonomy" id="3702"/>
    <lineage>
        <taxon>Eukaryota</taxon>
        <taxon>Viridiplantae</taxon>
        <taxon>Streptophyta</taxon>
        <taxon>Embryophyta</taxon>
        <taxon>Tracheophyta</taxon>
        <taxon>Spermatophyta</taxon>
        <taxon>Magnoliopsida</taxon>
        <taxon>eudicotyledons</taxon>
        <taxon>Gunneridae</taxon>
        <taxon>Pentapetalae</taxon>
        <taxon>rosids</taxon>
        <taxon>malvids</taxon>
        <taxon>Brassicales</taxon>
        <taxon>Brassicaceae</taxon>
        <taxon>Camelineae</taxon>
        <taxon>Arabidopsis</taxon>
    </lineage>
</organism>
<evidence type="ECO:0000255" key="1"/>
<evidence type="ECO:0000256" key="2">
    <source>
        <dbReference type="SAM" id="MobiDB-lite"/>
    </source>
</evidence>
<evidence type="ECO:0000269" key="3">
    <source>
    </source>
</evidence>
<evidence type="ECO:0000269" key="4">
    <source>
    </source>
</evidence>
<evidence type="ECO:0000269" key="5">
    <source>
    </source>
</evidence>
<evidence type="ECO:0000305" key="6"/>
<keyword id="KW-0175">Coiled coil</keyword>
<keyword id="KW-0433">Leucine-rich repeat</keyword>
<keyword id="KW-1185">Reference proteome</keyword>
<keyword id="KW-0677">Repeat</keyword>
<comment type="function">
    <text evidence="4 5">Leucine-rich repeat protein that likely mediates protein interactions, possibly in the context of signal transduction. PIRL1 acts redundantly with PIRL9 in the differentiation of microspores into pollen.</text>
</comment>
<comment type="tissue specificity">
    <text evidence="3">Widely expressed.</text>
</comment>
<comment type="disruption phenotype">
    <text evidence="4 5">No visible phenotype. Pirl1 and pirl9 double mutant is lethal due to a male-specific transmission failure leading to a severe pollen malformation.</text>
</comment>
<comment type="similarity">
    <text evidence="6">Belongs to the SHOC2 family.</text>
</comment>
<reference key="1">
    <citation type="journal article" date="2005" name="Plant Cell Physiol.">
        <title>PIRLs: a novel class of plant intracellular leucine-rich repeat proteins.</title>
        <authorList>
            <person name="Forsthoefel N.R."/>
            <person name="Cutler K."/>
            <person name="Port M.D."/>
            <person name="Yamamoto T."/>
            <person name="Vernon D.M."/>
        </authorList>
    </citation>
    <scope>NUCLEOTIDE SEQUENCE [MRNA]</scope>
    <scope>GENE FAMILY</scope>
    <scope>MOTIF GVYW</scope>
    <scope>TISSUE SPECIFICITY</scope>
</reference>
<reference key="2">
    <citation type="journal article" date="1997" name="DNA Res.">
        <title>Structural analysis of Arabidopsis thaliana chromosome 5. I. Sequence features of the 1.6 Mb regions covered by twenty physically assigned P1 clones.</title>
        <authorList>
            <person name="Sato S."/>
            <person name="Kotani H."/>
            <person name="Nakamura Y."/>
            <person name="Kaneko T."/>
            <person name="Asamizu E."/>
            <person name="Fukami M."/>
            <person name="Miyajima N."/>
            <person name="Tabata S."/>
        </authorList>
    </citation>
    <scope>NUCLEOTIDE SEQUENCE [LARGE SCALE GENOMIC DNA]</scope>
    <source>
        <strain>cv. Columbia</strain>
    </source>
</reference>
<reference key="3">
    <citation type="journal article" date="2017" name="Plant J.">
        <title>Araport11: a complete reannotation of the Arabidopsis thaliana reference genome.</title>
        <authorList>
            <person name="Cheng C.Y."/>
            <person name="Krishnakumar V."/>
            <person name="Chan A.P."/>
            <person name="Thibaud-Nissen F."/>
            <person name="Schobel S."/>
            <person name="Town C.D."/>
        </authorList>
    </citation>
    <scope>GENOME REANNOTATION</scope>
    <source>
        <strain>cv. Columbia</strain>
    </source>
</reference>
<reference key="4">
    <citation type="submission" date="2004-11" db="EMBL/GenBank/DDBJ databases">
        <title>Arabidopsis ORF clones.</title>
        <authorList>
            <person name="Shinn P."/>
            <person name="Chen H."/>
            <person name="Cheuk R.F."/>
            <person name="Kim C.J."/>
            <person name="Ecker J.R."/>
        </authorList>
    </citation>
    <scope>NUCLEOTIDE SEQUENCE [LARGE SCALE MRNA]</scope>
    <source>
        <strain>cv. Columbia</strain>
    </source>
</reference>
<reference key="5">
    <citation type="submission" date="2006-07" db="EMBL/GenBank/DDBJ databases">
        <title>Large-scale analysis of RIKEN Arabidopsis full-length (RAFL) cDNAs.</title>
        <authorList>
            <person name="Totoki Y."/>
            <person name="Seki M."/>
            <person name="Ishida J."/>
            <person name="Nakajima M."/>
            <person name="Enju A."/>
            <person name="Kamiya A."/>
            <person name="Narusaka M."/>
            <person name="Shin-i T."/>
            <person name="Nakagawa M."/>
            <person name="Sakamoto N."/>
            <person name="Oishi K."/>
            <person name="Kohara Y."/>
            <person name="Kobayashi M."/>
            <person name="Toyoda A."/>
            <person name="Sakaki Y."/>
            <person name="Sakurai T."/>
            <person name="Iida K."/>
            <person name="Akiyama K."/>
            <person name="Satou M."/>
            <person name="Toyoda T."/>
            <person name="Konagaya A."/>
            <person name="Carninci P."/>
            <person name="Kawai J."/>
            <person name="Hayashizaki Y."/>
            <person name="Shinozaki K."/>
        </authorList>
    </citation>
    <scope>NUCLEOTIDE SEQUENCE [LARGE SCALE MRNA]</scope>
    <source>
        <strain>cv. Columbia</strain>
    </source>
</reference>
<reference key="6">
    <citation type="journal article" date="2010" name="Planta">
        <title>PIRL1 and PIRL9, encoding members of a novel plant-specific family of leucine-rich repeat proteins, are essential for differentiation of microspores into pollen.</title>
        <authorList>
            <person name="Forsthoefel N.R."/>
            <person name="Dao T.P."/>
            <person name="Vernon D.M."/>
        </authorList>
    </citation>
    <scope>FUNCTION</scope>
    <scope>DISRUPTION PHENOTYPE</scope>
</reference>
<reference key="7">
    <citation type="journal article" date="2011" name="Planta">
        <title>Effect of sporophytic PIRL9 genotype on post-meiotic expression of the Arabidopsis pirl1;pirl9 mutant pollen phenotype.</title>
        <authorList>
            <person name="Forsthoefel N.R."/>
            <person name="Vernon D.M."/>
        </authorList>
    </citation>
    <scope>FUNCTION</scope>
    <scope>DISRUPTION PHENOTYPE</scope>
</reference>
<dbReference type="EMBL" id="AY849571">
    <property type="protein sequence ID" value="AAW57410.1"/>
    <property type="molecule type" value="mRNA"/>
</dbReference>
<dbReference type="EMBL" id="AB005237">
    <property type="protein sequence ID" value="BAB09679.1"/>
    <property type="molecule type" value="Genomic_DNA"/>
</dbReference>
<dbReference type="EMBL" id="CP002688">
    <property type="protein sequence ID" value="AED90932.1"/>
    <property type="molecule type" value="Genomic_DNA"/>
</dbReference>
<dbReference type="EMBL" id="BT015883">
    <property type="protein sequence ID" value="AAU95419.1"/>
    <property type="molecule type" value="mRNA"/>
</dbReference>
<dbReference type="EMBL" id="BT020196">
    <property type="protein sequence ID" value="AAV59262.1"/>
    <property type="molecule type" value="mRNA"/>
</dbReference>
<dbReference type="EMBL" id="AK228975">
    <property type="protein sequence ID" value="BAF00864.1"/>
    <property type="molecule type" value="mRNA"/>
</dbReference>
<dbReference type="RefSeq" id="NP_196204.1">
    <property type="nucleotide sequence ID" value="NM_120667.5"/>
</dbReference>
<dbReference type="SMR" id="Q9FFJ3"/>
<dbReference type="FunCoup" id="Q9FFJ3">
    <property type="interactions" value="954"/>
</dbReference>
<dbReference type="STRING" id="3702.Q9FFJ3"/>
<dbReference type="iPTMnet" id="Q9FFJ3"/>
<dbReference type="PaxDb" id="3702-AT5G05850.1"/>
<dbReference type="ProteomicsDB" id="234962"/>
<dbReference type="EnsemblPlants" id="AT5G05850.1">
    <property type="protein sequence ID" value="AT5G05850.1"/>
    <property type="gene ID" value="AT5G05850"/>
</dbReference>
<dbReference type="GeneID" id="830470"/>
<dbReference type="Gramene" id="AT5G05850.1">
    <property type="protein sequence ID" value="AT5G05850.1"/>
    <property type="gene ID" value="AT5G05850"/>
</dbReference>
<dbReference type="KEGG" id="ath:AT5G05850"/>
<dbReference type="Araport" id="AT5G05850"/>
<dbReference type="TAIR" id="AT5G05850">
    <property type="gene designation" value="PIRL1"/>
</dbReference>
<dbReference type="eggNOG" id="KOG0619">
    <property type="taxonomic scope" value="Eukaryota"/>
</dbReference>
<dbReference type="HOGENOM" id="CLU_021557_0_0_1"/>
<dbReference type="InParanoid" id="Q9FFJ3"/>
<dbReference type="OMA" id="TFMAKRW"/>
<dbReference type="PhylomeDB" id="Q9FFJ3"/>
<dbReference type="PRO" id="PR:Q9FFJ3"/>
<dbReference type="Proteomes" id="UP000006548">
    <property type="component" value="Chromosome 5"/>
</dbReference>
<dbReference type="ExpressionAtlas" id="Q9FFJ3">
    <property type="expression patterns" value="baseline and differential"/>
</dbReference>
<dbReference type="GO" id="GO:0055046">
    <property type="term" value="P:microgametogenesis"/>
    <property type="evidence" value="ECO:0000316"/>
    <property type="project" value="UniProtKB"/>
</dbReference>
<dbReference type="GO" id="GO:0009555">
    <property type="term" value="P:pollen development"/>
    <property type="evidence" value="ECO:0000316"/>
    <property type="project" value="UniProtKB"/>
</dbReference>
<dbReference type="FunFam" id="3.80.10.10:FF:000746">
    <property type="entry name" value="Plant intracellular Ras-group-related LRR protein 2"/>
    <property type="match status" value="1"/>
</dbReference>
<dbReference type="FunFam" id="3.80.10.10:FF:000610">
    <property type="entry name" value="Plant intracellular Ras-group-related LRR protein 9"/>
    <property type="match status" value="1"/>
</dbReference>
<dbReference type="Gene3D" id="3.80.10.10">
    <property type="entry name" value="Ribonuclease Inhibitor"/>
    <property type="match status" value="2"/>
</dbReference>
<dbReference type="InterPro" id="IPR001611">
    <property type="entry name" value="Leu-rich_rpt"/>
</dbReference>
<dbReference type="InterPro" id="IPR003591">
    <property type="entry name" value="Leu-rich_rpt_typical-subtyp"/>
</dbReference>
<dbReference type="InterPro" id="IPR032675">
    <property type="entry name" value="LRR_dom_sf"/>
</dbReference>
<dbReference type="InterPro" id="IPR050216">
    <property type="entry name" value="LRR_domain-containing"/>
</dbReference>
<dbReference type="PANTHER" id="PTHR48051">
    <property type="match status" value="1"/>
</dbReference>
<dbReference type="PANTHER" id="PTHR48051:SF54">
    <property type="entry name" value="LEUCINE-RICH REPEAT-CONTAINING PROTEIN"/>
    <property type="match status" value="1"/>
</dbReference>
<dbReference type="Pfam" id="PF13855">
    <property type="entry name" value="LRR_8"/>
    <property type="match status" value="3"/>
</dbReference>
<dbReference type="SMART" id="SM00364">
    <property type="entry name" value="LRR_BAC"/>
    <property type="match status" value="8"/>
</dbReference>
<dbReference type="SMART" id="SM00369">
    <property type="entry name" value="LRR_TYP"/>
    <property type="match status" value="9"/>
</dbReference>
<dbReference type="SUPFAM" id="SSF52058">
    <property type="entry name" value="L domain-like"/>
    <property type="match status" value="1"/>
</dbReference>
<dbReference type="PROSITE" id="PS51450">
    <property type="entry name" value="LRR"/>
    <property type="match status" value="9"/>
</dbReference>
<sequence>MATELNPKNFPVLSYVLDRLPSFTAKSSSSSDVEPPPSKSDPSSSSNHSIEIVTQMPHLAHPDVLASMTNATADVSQTRSVLRTLGPRPDHETVDRARARLREIDASLSESFEEIALSPNDIDVAEKEQKRREAVEQEKIWYKSILKLNELHESYEKLLKEAEERLVRIYESAEKNAAAVAEEEAAEVEVNEEVVSILQQAAENPLDRVDLSGRKLKLLPEAFGKIQGLLVLNLYNNQLQAIPDSIAGLHNLLELDVSTNFLETLPDSIGLLSKLKILNVSCNKLTTLPDSICHCGSLVVLDASYNNLTYLPTNIGFELVKLEKLLIHLNKIRSLPTSIGEMRSLRYLDAHFNELNGLPNSFGLLTNLEYLNLSSNFSDLQDLPASFGDLISLQELDLSNNQIHSLPDAFGTLVNLTKLNLDQNPLVVPPDEVVKQGVDAVKMYMGKRWVSMLEEEEKMANMKDEMDQTNTDWLTRTTSKLKTYVTEVSEYLGSNPPRDPYLDQQL</sequence>
<protein>
    <recommendedName>
        <fullName>Plant intracellular Ras-group-related LRR protein 1</fullName>
    </recommendedName>
</protein>
<feature type="chain" id="PRO_0000423601" description="Plant intracellular Ras-group-related LRR protein 1">
    <location>
        <begin position="1"/>
        <end position="506"/>
    </location>
</feature>
<feature type="repeat" description="LRR 1">
    <location>
        <begin position="203"/>
        <end position="225"/>
    </location>
</feature>
<feature type="repeat" description="LRR 2">
    <location>
        <begin position="226"/>
        <end position="249"/>
    </location>
</feature>
<feature type="repeat" description="LRR 3">
    <location>
        <begin position="251"/>
        <end position="272"/>
    </location>
</feature>
<feature type="repeat" description="LRR 4">
    <location>
        <begin position="273"/>
        <end position="295"/>
    </location>
</feature>
<feature type="repeat" description="LRR 5">
    <location>
        <begin position="297"/>
        <end position="319"/>
    </location>
</feature>
<feature type="repeat" description="LRR 6">
    <location>
        <begin position="320"/>
        <end position="342"/>
    </location>
</feature>
<feature type="repeat" description="LRR 7">
    <location>
        <begin position="344"/>
        <end position="364"/>
    </location>
</feature>
<feature type="repeat" description="LRR 8">
    <location>
        <begin position="365"/>
        <end position="389"/>
    </location>
</feature>
<feature type="repeat" description="LRR 9">
    <location>
        <begin position="390"/>
        <end position="412"/>
    </location>
</feature>
<feature type="repeat" description="LRR 10">
    <location>
        <begin position="414"/>
        <end position="436"/>
    </location>
</feature>
<feature type="region of interest" description="Disordered" evidence="2">
    <location>
        <begin position="24"/>
        <end position="48"/>
    </location>
</feature>
<feature type="coiled-coil region" evidence="1">
    <location>
        <begin position="143"/>
        <end position="193"/>
    </location>
</feature>
<feature type="short sequence motif" description="GVYW">
    <location>
        <begin position="437"/>
        <end position="449"/>
    </location>
</feature>
<proteinExistence type="evidence at transcript level"/>
<gene>
    <name type="primary">PIRL1</name>
    <name type="ordered locus">At5g05850</name>
    <name type="ORF">MJJ3.27</name>
</gene>